<feature type="chain" id="PRO_0000356227" description="Phosphatidylinositol-3,5-bisphosphate 3-phosphatase MTMR2">
    <location>
        <begin position="1"/>
        <end position="643"/>
    </location>
</feature>
<feature type="domain" description="GRAM" evidence="3">
    <location>
        <begin position="68"/>
        <end position="139"/>
    </location>
</feature>
<feature type="domain" description="Myotubularin phosphatase" evidence="4">
    <location>
        <begin position="205"/>
        <end position="580"/>
    </location>
</feature>
<feature type="region of interest" description="Disordered" evidence="5">
    <location>
        <begin position="1"/>
        <end position="54"/>
    </location>
</feature>
<feature type="region of interest" description="Disordered" evidence="5">
    <location>
        <begin position="614"/>
        <end position="643"/>
    </location>
</feature>
<feature type="coiled-coil region" evidence="3">
    <location>
        <begin position="593"/>
        <end position="627"/>
    </location>
</feature>
<feature type="compositionally biased region" description="Polar residues" evidence="5">
    <location>
        <begin position="1"/>
        <end position="12"/>
    </location>
</feature>
<feature type="compositionally biased region" description="Polar residues" evidence="5">
    <location>
        <begin position="23"/>
        <end position="40"/>
    </location>
</feature>
<feature type="compositionally biased region" description="Low complexity" evidence="5">
    <location>
        <begin position="41"/>
        <end position="54"/>
    </location>
</feature>
<feature type="active site" description="Phosphocysteine intermediate" evidence="1">
    <location>
        <position position="417"/>
    </location>
</feature>
<feature type="binding site" evidence="1">
    <location>
        <position position="330"/>
    </location>
    <ligand>
        <name>a 1,2-diacyl-sn-glycero-3-phospho-(1D-myo-inositol-3,5-bisphosphate)</name>
        <dbReference type="ChEBI" id="CHEBI:57923"/>
    </ligand>
</feature>
<feature type="binding site" evidence="1">
    <location>
        <position position="330"/>
    </location>
    <ligand>
        <name>a 1,2-diacyl-sn-glycero-3-phospho-(1D-myo-inositol-3-phosphate)</name>
        <dbReference type="ChEBI" id="CHEBI:58088"/>
    </ligand>
</feature>
<feature type="binding site" evidence="1">
    <location>
        <position position="355"/>
    </location>
    <ligand>
        <name>a 1,2-diacyl-sn-glycero-3-phospho-(1D-myo-inositol-3,5-bisphosphate)</name>
        <dbReference type="ChEBI" id="CHEBI:57923"/>
    </ligand>
</feature>
<feature type="binding site" evidence="1">
    <location>
        <position position="355"/>
    </location>
    <ligand>
        <name>a 1,2-diacyl-sn-glycero-3-phospho-(1D-myo-inositol-3-phosphate)</name>
        <dbReference type="ChEBI" id="CHEBI:58088"/>
    </ligand>
</feature>
<feature type="binding site" evidence="1">
    <location>
        <position position="356"/>
    </location>
    <ligand>
        <name>a 1,2-diacyl-sn-glycero-3-phospho-(1D-myo-inositol-3,5-bisphosphate)</name>
        <dbReference type="ChEBI" id="CHEBI:57923"/>
    </ligand>
</feature>
<feature type="binding site" evidence="1">
    <location>
        <position position="356"/>
    </location>
    <ligand>
        <name>a 1,2-diacyl-sn-glycero-3-phospho-(1D-myo-inositol-3-phosphate)</name>
        <dbReference type="ChEBI" id="CHEBI:58088"/>
    </ligand>
</feature>
<feature type="binding site" evidence="1">
    <location>
        <position position="418"/>
    </location>
    <ligand>
        <name>a 1,2-diacyl-sn-glycero-3-phospho-(1D-myo-inositol-3,5-bisphosphate)</name>
        <dbReference type="ChEBI" id="CHEBI:57923"/>
    </ligand>
</feature>
<feature type="binding site" evidence="1">
    <location>
        <position position="418"/>
    </location>
    <ligand>
        <name>a 1,2-diacyl-sn-glycero-3-phospho-(1D-myo-inositol-3-phosphate)</name>
        <dbReference type="ChEBI" id="CHEBI:58088"/>
    </ligand>
</feature>
<feature type="binding site" evidence="1">
    <location>
        <position position="419"/>
    </location>
    <ligand>
        <name>a 1,2-diacyl-sn-glycero-3-phospho-(1D-myo-inositol-3,5-bisphosphate)</name>
        <dbReference type="ChEBI" id="CHEBI:57923"/>
    </ligand>
</feature>
<feature type="binding site" evidence="1">
    <location>
        <position position="419"/>
    </location>
    <ligand>
        <name>a 1,2-diacyl-sn-glycero-3-phospho-(1D-myo-inositol-3-phosphate)</name>
        <dbReference type="ChEBI" id="CHEBI:58088"/>
    </ligand>
</feature>
<feature type="binding site" evidence="1">
    <location>
        <position position="420"/>
    </location>
    <ligand>
        <name>a 1,2-diacyl-sn-glycero-3-phospho-(1D-myo-inositol-3,5-bisphosphate)</name>
        <dbReference type="ChEBI" id="CHEBI:57923"/>
    </ligand>
</feature>
<feature type="binding site" evidence="1">
    <location>
        <position position="420"/>
    </location>
    <ligand>
        <name>a 1,2-diacyl-sn-glycero-3-phospho-(1D-myo-inositol-3-phosphate)</name>
        <dbReference type="ChEBI" id="CHEBI:58088"/>
    </ligand>
</feature>
<feature type="binding site" evidence="1">
    <location>
        <position position="421"/>
    </location>
    <ligand>
        <name>a 1,2-diacyl-sn-glycero-3-phospho-(1D-myo-inositol-3,5-bisphosphate)</name>
        <dbReference type="ChEBI" id="CHEBI:57923"/>
    </ligand>
</feature>
<feature type="binding site" evidence="1">
    <location>
        <position position="421"/>
    </location>
    <ligand>
        <name>a 1,2-diacyl-sn-glycero-3-phospho-(1D-myo-inositol-3-phosphate)</name>
        <dbReference type="ChEBI" id="CHEBI:58088"/>
    </ligand>
</feature>
<feature type="binding site" evidence="1">
    <location>
        <position position="422"/>
    </location>
    <ligand>
        <name>a 1,2-diacyl-sn-glycero-3-phospho-(1D-myo-inositol-3,5-bisphosphate)</name>
        <dbReference type="ChEBI" id="CHEBI:57923"/>
    </ligand>
</feature>
<feature type="binding site" evidence="1">
    <location>
        <position position="422"/>
    </location>
    <ligand>
        <name>a 1,2-diacyl-sn-glycero-3-phospho-(1D-myo-inositol-3-phosphate)</name>
        <dbReference type="ChEBI" id="CHEBI:58088"/>
    </ligand>
</feature>
<feature type="binding site" evidence="1">
    <location>
        <position position="423"/>
    </location>
    <ligand>
        <name>a 1,2-diacyl-sn-glycero-3-phospho-(1D-myo-inositol-3,5-bisphosphate)</name>
        <dbReference type="ChEBI" id="CHEBI:57923"/>
    </ligand>
</feature>
<feature type="binding site" evidence="1">
    <location>
        <position position="423"/>
    </location>
    <ligand>
        <name>a 1,2-diacyl-sn-glycero-3-phospho-(1D-myo-inositol-3-phosphate)</name>
        <dbReference type="ChEBI" id="CHEBI:58088"/>
    </ligand>
</feature>
<feature type="binding site" evidence="1">
    <location>
        <position position="459"/>
    </location>
    <ligand>
        <name>a 1,2-diacyl-sn-glycero-3-phospho-(1D-myo-inositol-3,5-bisphosphate)</name>
        <dbReference type="ChEBI" id="CHEBI:57923"/>
    </ligand>
</feature>
<feature type="binding site" evidence="1">
    <location>
        <position position="463"/>
    </location>
    <ligand>
        <name>a 1,2-diacyl-sn-glycero-3-phospho-(1D-myo-inositol-3,5-bisphosphate)</name>
        <dbReference type="ChEBI" id="CHEBI:57923"/>
    </ligand>
</feature>
<feature type="binding site" evidence="1">
    <location>
        <position position="463"/>
    </location>
    <ligand>
        <name>a 1,2-diacyl-sn-glycero-3-phospho-(1D-myo-inositol-3-phosphate)</name>
        <dbReference type="ChEBI" id="CHEBI:58088"/>
    </ligand>
</feature>
<feature type="modified residue" description="Phosphoserine" evidence="2">
    <location>
        <position position="6"/>
    </location>
</feature>
<feature type="modified residue" description="Phosphoserine" evidence="2">
    <location>
        <position position="9"/>
    </location>
</feature>
<feature type="modified residue" description="Phosphoserine" evidence="1">
    <location>
        <position position="58"/>
    </location>
</feature>
<sequence length="643" mass="73348">MEKSSSCESLGSQPAVARPPSVDSLSSASTSHSENSVHTKSASVVSSDSISTSAENFSPDLRVLRESNKLAEMEEPPLLPGENIKDMAKDVTYICPFTGAVRGTLTVTNYRLYFKSMERDPPFVLDASLGVISRVEKIGGASSRGENSYGLETVCKDIRNLRFAHKPEGRTRRSIFENLMKYAFPVSNNLSLFAFEYKEVFPENGWKLYDSLSEYRRQGIPNESWRITKVNERYELCDTYPALLVVPANIPDEELKRVASFRSRGRIPVLSWIHPESQATITRCSQPMVGVSGKRSKEDEKYLQAIMDSNAQSHKIFIFDARPSVNAVANKAKGGGYESEDAYQNAELVFLDIHNIHVMRESLRKLKEIVYPNIEETHWLSNLESTHWLEHIKLILAGALRIADRVESGKTSVVVHCSDGWDRTAQLTSLAMLMLDGYYRTIRGFEVLVEKEWLSFGHRFQLRVGHGDKNHADADRSPVFLQFIDCVWQMTRQFPTAFEFNEYFLITILDHLYSCLFGTFLCNSEQQRGKENLPRRTVSLWSYINSQLEDFTNPLYGSYSNHVLYPVASMRHLELWVGYYVRWNPRMKPQEPIHNRYKELLAKRAELQKKVEELQREISNRSTSSSERAGSPAQCVTPVQTVV</sequence>
<organism>
    <name type="scientific">Bos taurus</name>
    <name type="common">Bovine</name>
    <dbReference type="NCBI Taxonomy" id="9913"/>
    <lineage>
        <taxon>Eukaryota</taxon>
        <taxon>Metazoa</taxon>
        <taxon>Chordata</taxon>
        <taxon>Craniata</taxon>
        <taxon>Vertebrata</taxon>
        <taxon>Euteleostomi</taxon>
        <taxon>Mammalia</taxon>
        <taxon>Eutheria</taxon>
        <taxon>Laurasiatheria</taxon>
        <taxon>Artiodactyla</taxon>
        <taxon>Ruminantia</taxon>
        <taxon>Pecora</taxon>
        <taxon>Bovidae</taxon>
        <taxon>Bovinae</taxon>
        <taxon>Bos</taxon>
    </lineage>
</organism>
<accession>A6QLT2</accession>
<reference key="1">
    <citation type="submission" date="2007-06" db="EMBL/GenBank/DDBJ databases">
        <authorList>
            <consortium name="NIH - Mammalian Gene Collection (MGC) project"/>
        </authorList>
    </citation>
    <scope>NUCLEOTIDE SEQUENCE [LARGE SCALE MRNA]</scope>
    <source>
        <strain>Hereford</strain>
        <tissue>Basal ganglia</tissue>
    </source>
</reference>
<name>MTMR2_BOVIN</name>
<keyword id="KW-0966">Cell projection</keyword>
<keyword id="KW-0175">Coiled coil</keyword>
<keyword id="KW-0963">Cytoplasm</keyword>
<keyword id="KW-0967">Endosome</keyword>
<keyword id="KW-0378">Hydrolase</keyword>
<keyword id="KW-0443">Lipid metabolism</keyword>
<keyword id="KW-0472">Membrane</keyword>
<keyword id="KW-0597">Phosphoprotein</keyword>
<keyword id="KW-1185">Reference proteome</keyword>
<proteinExistence type="evidence at transcript level"/>
<protein>
    <recommendedName>
        <fullName>Phosphatidylinositol-3,5-bisphosphate 3-phosphatase MTMR2</fullName>
        <ecNumber evidence="1">3.1.3.95</ecNumber>
    </recommendedName>
    <alternativeName>
        <fullName evidence="1">Myotubularin-related protein 2</fullName>
    </alternativeName>
    <alternativeName>
        <fullName evidence="1">Phosphatidylinositol-3-phosphate phosphatase</fullName>
    </alternativeName>
</protein>
<comment type="function">
    <text evidence="1">Lipid phosphatase that specifically dephosphorylates the D-3 position of phosphatidylinositol 3-phosphate and phosphatidylinositol 3,5-bisphosphate, generating phosphatidylinositol and phosphatidylinositol 5-phosphate. Regulates the level of these phosphoinositides critical for various biological processes including autophagy initiation and autophagosome maturation.</text>
</comment>
<comment type="catalytic activity">
    <reaction evidence="1">
        <text>a 1,2-diacyl-sn-glycero-3-phospho-(1D-myo-inositol-3,5-bisphosphate) + H2O = a 1,2-diacyl-sn-glycero-3-phospho-(1D-myo-inositol-5-phosphate) + phosphate</text>
        <dbReference type="Rhea" id="RHEA:39019"/>
        <dbReference type="ChEBI" id="CHEBI:15377"/>
        <dbReference type="ChEBI" id="CHEBI:43474"/>
        <dbReference type="ChEBI" id="CHEBI:57795"/>
        <dbReference type="ChEBI" id="CHEBI:57923"/>
        <dbReference type="EC" id="3.1.3.95"/>
    </reaction>
    <physiologicalReaction direction="left-to-right" evidence="1">
        <dbReference type="Rhea" id="RHEA:39020"/>
    </physiologicalReaction>
</comment>
<comment type="catalytic activity">
    <reaction evidence="1">
        <text>a 1,2-diacyl-sn-glycero-3-phospho-(1D-myo-inositol-3-phosphate) + H2O = a 1,2-diacyl-sn-glycero-3-phospho-(1D-myo-inositol) + phosphate</text>
        <dbReference type="Rhea" id="RHEA:12316"/>
        <dbReference type="ChEBI" id="CHEBI:15377"/>
        <dbReference type="ChEBI" id="CHEBI:43474"/>
        <dbReference type="ChEBI" id="CHEBI:57880"/>
        <dbReference type="ChEBI" id="CHEBI:58088"/>
    </reaction>
    <physiologicalReaction direction="left-to-right" evidence="1">
        <dbReference type="Rhea" id="RHEA:12317"/>
    </physiologicalReaction>
</comment>
<comment type="catalytic activity">
    <reaction evidence="1">
        <text>1,2-dioctanoyl-sn-glycero-3-phospho-(1-D-myo-inositol-3-phosphate) + H2O = 1,2-dioctanoyl-sn-glycero-3-phospho-(1D-myo-inositol) + phosphate</text>
        <dbReference type="Rhea" id="RHEA:42328"/>
        <dbReference type="ChEBI" id="CHEBI:15377"/>
        <dbReference type="ChEBI" id="CHEBI:43474"/>
        <dbReference type="ChEBI" id="CHEBI:65221"/>
        <dbReference type="ChEBI" id="CHEBI:78934"/>
    </reaction>
    <physiologicalReaction direction="left-to-right" evidence="1">
        <dbReference type="Rhea" id="RHEA:42329"/>
    </physiologicalReaction>
</comment>
<comment type="catalytic activity">
    <reaction evidence="1">
        <text>1,2-dioctanoyl-sn-glycero-3-phospho-(1D-myo-inositol-3,5-bisphosphate) + H2O = 1,2-dioctanoyl-sn-glycero-3-phospho-(1D-myo-inositol-5-phosphate) + phosphate</text>
        <dbReference type="Rhea" id="RHEA:45632"/>
        <dbReference type="ChEBI" id="CHEBI:15377"/>
        <dbReference type="ChEBI" id="CHEBI:43474"/>
        <dbReference type="ChEBI" id="CHEBI:78911"/>
        <dbReference type="ChEBI" id="CHEBI:85342"/>
    </reaction>
    <physiologicalReaction direction="left-to-right" evidence="1">
        <dbReference type="Rhea" id="RHEA:45633"/>
    </physiologicalReaction>
</comment>
<comment type="subunit">
    <text evidence="1 2">Homodimer (via coiled-coil domain). Heterotetramer consisting of one MTMR2 dimer and one SBF2/MTMR13 dimer; specifically in peripheral nerves stabilizes SBF2/MTMR13 at the membranes and increases MTMR2 catalytic activity towards phosphatidylinositol 3,5-bisphosphate and to a lesser extent towards phosphatidylinositol 3-phosphate (By similarity). Heterodimer with SBF1/MTMR5; acts as an adapter for the phosphatase MTMR2 to regulate MTMR2 catalytic activity and subcellular location (By similarity). Heterodimer with MTMR12 (By similarity).</text>
</comment>
<comment type="subcellular location">
    <subcellularLocation>
        <location evidence="1">Cytoplasm</location>
    </subcellularLocation>
    <subcellularLocation>
        <location evidence="1">Early endosome membrane</location>
        <topology evidence="1">Peripheral membrane protein</topology>
    </subcellularLocation>
    <subcellularLocation>
        <location evidence="1">Cytoplasm</location>
        <location evidence="1">Perinuclear region</location>
    </subcellularLocation>
    <subcellularLocation>
        <location evidence="2">Cell projection</location>
        <location evidence="2">Axon</location>
    </subcellularLocation>
    <subcellularLocation>
        <location evidence="2">Endosome membrane</location>
        <topology evidence="1">Peripheral membrane protein</topology>
    </subcellularLocation>
    <text evidence="1 2">Partly associated with membranes (By similarity). Localizes to vacuoles in hypo-osmotic conditions (By similarity).</text>
</comment>
<comment type="domain">
    <text evidence="1 2">The coiled-coil domain mediates homodimerization. Also mediates interaction with SBF1/MTMR5 (By similarity). By mediating MTMR2 homodimerization, indirectly involved in SBF2/MTMR13 and MTMR2 heterotetramerization (By similarity).</text>
</comment>
<comment type="domain">
    <text evidence="2">The GRAM domain mediates binding to phosphatidylinositol 4-phosphate, phosphatidylinositol 5-phosphate, phosphatidylinositol 3,5-bisphosphate and phosphatidylinositol 3,4,5-trisphosphate.</text>
</comment>
<comment type="PTM">
    <text evidence="1">Phosphorylation at Ser-58 decreases MTMR2 localization to endocytic vesicular structures.</text>
</comment>
<comment type="similarity">
    <text evidence="6">Belongs to the protein-tyrosine phosphatase family. Non-receptor class myotubularin subfamily.</text>
</comment>
<dbReference type="EC" id="3.1.3.95" evidence="1"/>
<dbReference type="EMBL" id="BC148076">
    <property type="protein sequence ID" value="AAI48077.1"/>
    <property type="molecule type" value="mRNA"/>
</dbReference>
<dbReference type="RefSeq" id="NP_001095664.1">
    <property type="nucleotide sequence ID" value="NM_001102194.1"/>
</dbReference>
<dbReference type="RefSeq" id="XP_024831168.1">
    <property type="nucleotide sequence ID" value="XM_024975400.2"/>
</dbReference>
<dbReference type="SMR" id="A6QLT2"/>
<dbReference type="FunCoup" id="A6QLT2">
    <property type="interactions" value="3481"/>
</dbReference>
<dbReference type="STRING" id="9913.ENSBTAP00000073339"/>
<dbReference type="PaxDb" id="9913-ENSBTAP00000022028"/>
<dbReference type="Ensembl" id="ENSBTAT00000071612.2">
    <property type="protein sequence ID" value="ENSBTAP00000073339.1"/>
    <property type="gene ID" value="ENSBTAG00000016557.7"/>
</dbReference>
<dbReference type="GeneID" id="536810"/>
<dbReference type="KEGG" id="bta:536810"/>
<dbReference type="CTD" id="8898"/>
<dbReference type="VEuPathDB" id="HostDB:ENSBTAG00000016557"/>
<dbReference type="VGNC" id="VGNC:31741">
    <property type="gene designation" value="MTMR2"/>
</dbReference>
<dbReference type="eggNOG" id="KOG4471">
    <property type="taxonomic scope" value="Eukaryota"/>
</dbReference>
<dbReference type="GeneTree" id="ENSGT00940000153669"/>
<dbReference type="HOGENOM" id="CLU_001839_4_1_1"/>
<dbReference type="InParanoid" id="A6QLT2"/>
<dbReference type="OMA" id="WRATKIN"/>
<dbReference type="OrthoDB" id="271628at2759"/>
<dbReference type="Reactome" id="R-BTA-1483248">
    <property type="pathway name" value="Synthesis of PIPs at the ER membrane"/>
</dbReference>
<dbReference type="Reactome" id="R-BTA-1660516">
    <property type="pathway name" value="Synthesis of PIPs at the early endosome membrane"/>
</dbReference>
<dbReference type="Reactome" id="R-BTA-1660517">
    <property type="pathway name" value="Synthesis of PIPs at the late endosome membrane"/>
</dbReference>
<dbReference type="Proteomes" id="UP000009136">
    <property type="component" value="Chromosome 15"/>
</dbReference>
<dbReference type="Bgee" id="ENSBTAG00000016557">
    <property type="expression patterns" value="Expressed in spermatocyte and 108 other cell types or tissues"/>
</dbReference>
<dbReference type="GO" id="GO:0030424">
    <property type="term" value="C:axon"/>
    <property type="evidence" value="ECO:0007669"/>
    <property type="project" value="UniProtKB-SubCell"/>
</dbReference>
<dbReference type="GO" id="GO:0005737">
    <property type="term" value="C:cytoplasm"/>
    <property type="evidence" value="ECO:0000318"/>
    <property type="project" value="GO_Central"/>
</dbReference>
<dbReference type="GO" id="GO:0005829">
    <property type="term" value="C:cytosol"/>
    <property type="evidence" value="ECO:0000250"/>
    <property type="project" value="UniProtKB"/>
</dbReference>
<dbReference type="GO" id="GO:0031901">
    <property type="term" value="C:early endosome membrane"/>
    <property type="evidence" value="ECO:0007669"/>
    <property type="project" value="UniProtKB-SubCell"/>
</dbReference>
<dbReference type="GO" id="GO:0016020">
    <property type="term" value="C:membrane"/>
    <property type="evidence" value="ECO:0000318"/>
    <property type="project" value="GO_Central"/>
</dbReference>
<dbReference type="GO" id="GO:0005634">
    <property type="term" value="C:nucleus"/>
    <property type="evidence" value="ECO:0007669"/>
    <property type="project" value="Ensembl"/>
</dbReference>
<dbReference type="GO" id="GO:0048471">
    <property type="term" value="C:perinuclear region of cytoplasm"/>
    <property type="evidence" value="ECO:0007669"/>
    <property type="project" value="UniProtKB-SubCell"/>
</dbReference>
<dbReference type="GO" id="GO:0005774">
    <property type="term" value="C:vacuolar membrane"/>
    <property type="evidence" value="ECO:0007669"/>
    <property type="project" value="Ensembl"/>
</dbReference>
<dbReference type="GO" id="GO:0042802">
    <property type="term" value="F:identical protein binding"/>
    <property type="evidence" value="ECO:0007669"/>
    <property type="project" value="Ensembl"/>
</dbReference>
<dbReference type="GO" id="GO:0052629">
    <property type="term" value="F:phosphatidylinositol-3,5-bisphosphate 3-phosphatase activity"/>
    <property type="evidence" value="ECO:0000250"/>
    <property type="project" value="UniProtKB"/>
</dbReference>
<dbReference type="GO" id="GO:0004438">
    <property type="term" value="F:phosphatidylinositol-3-phosphate phosphatase activity"/>
    <property type="evidence" value="ECO:0000250"/>
    <property type="project" value="UniProtKB"/>
</dbReference>
<dbReference type="GO" id="GO:0032288">
    <property type="term" value="P:myelin assembly"/>
    <property type="evidence" value="ECO:0007669"/>
    <property type="project" value="Ensembl"/>
</dbReference>
<dbReference type="GO" id="GO:0031642">
    <property type="term" value="P:negative regulation of myelination"/>
    <property type="evidence" value="ECO:0007669"/>
    <property type="project" value="Ensembl"/>
</dbReference>
<dbReference type="GO" id="GO:0048666">
    <property type="term" value="P:neuron development"/>
    <property type="evidence" value="ECO:0007669"/>
    <property type="project" value="Ensembl"/>
</dbReference>
<dbReference type="GO" id="GO:0046856">
    <property type="term" value="P:phosphatidylinositol dephosphorylation"/>
    <property type="evidence" value="ECO:0000250"/>
    <property type="project" value="UniProtKB"/>
</dbReference>
<dbReference type="GO" id="GO:0060304">
    <property type="term" value="P:regulation of phosphatidylinositol dephosphorylation"/>
    <property type="evidence" value="ECO:0007669"/>
    <property type="project" value="Ensembl"/>
</dbReference>
<dbReference type="CDD" id="cd14590">
    <property type="entry name" value="PTP-MTMR2"/>
    <property type="match status" value="1"/>
</dbReference>
<dbReference type="FunFam" id="2.30.29.30:FF:000038">
    <property type="entry name" value="Myotubularin 1, isoform CRA_a"/>
    <property type="match status" value="1"/>
</dbReference>
<dbReference type="Gene3D" id="2.30.29.30">
    <property type="entry name" value="Pleckstrin-homology domain (PH domain)/Phosphotyrosine-binding domain (PTB)"/>
    <property type="match status" value="1"/>
</dbReference>
<dbReference type="InterPro" id="IPR004182">
    <property type="entry name" value="GRAM"/>
</dbReference>
<dbReference type="InterPro" id="IPR030564">
    <property type="entry name" value="Myotubularin"/>
</dbReference>
<dbReference type="InterPro" id="IPR010569">
    <property type="entry name" value="Myotubularin-like_Pase_dom"/>
</dbReference>
<dbReference type="InterPro" id="IPR011993">
    <property type="entry name" value="PH-like_dom_sf"/>
</dbReference>
<dbReference type="InterPro" id="IPR029021">
    <property type="entry name" value="Prot-tyrosine_phosphatase-like"/>
</dbReference>
<dbReference type="InterPro" id="IPR016130">
    <property type="entry name" value="Tyr_Pase_AS"/>
</dbReference>
<dbReference type="InterPro" id="IPR003595">
    <property type="entry name" value="Tyr_Pase_cat"/>
</dbReference>
<dbReference type="InterPro" id="IPR000387">
    <property type="entry name" value="Tyr_Pase_dom"/>
</dbReference>
<dbReference type="PANTHER" id="PTHR10807">
    <property type="entry name" value="MYOTUBULARIN-RELATED"/>
    <property type="match status" value="1"/>
</dbReference>
<dbReference type="PANTHER" id="PTHR10807:SF42">
    <property type="entry name" value="MYOTUBULARIN-RELATED PROTEIN 2"/>
    <property type="match status" value="1"/>
</dbReference>
<dbReference type="Pfam" id="PF02893">
    <property type="entry name" value="GRAM"/>
    <property type="match status" value="1"/>
</dbReference>
<dbReference type="Pfam" id="PF06602">
    <property type="entry name" value="Myotub-related"/>
    <property type="match status" value="1"/>
</dbReference>
<dbReference type="SMART" id="SM00568">
    <property type="entry name" value="GRAM"/>
    <property type="match status" value="1"/>
</dbReference>
<dbReference type="SMART" id="SM00404">
    <property type="entry name" value="PTPc_motif"/>
    <property type="match status" value="1"/>
</dbReference>
<dbReference type="SUPFAM" id="SSF52799">
    <property type="entry name" value="(Phosphotyrosine protein) phosphatases II"/>
    <property type="match status" value="1"/>
</dbReference>
<dbReference type="SUPFAM" id="SSF50729">
    <property type="entry name" value="PH domain-like"/>
    <property type="match status" value="1"/>
</dbReference>
<dbReference type="PROSITE" id="PS51339">
    <property type="entry name" value="PPASE_MYOTUBULARIN"/>
    <property type="match status" value="1"/>
</dbReference>
<dbReference type="PROSITE" id="PS00383">
    <property type="entry name" value="TYR_PHOSPHATASE_1"/>
    <property type="match status" value="1"/>
</dbReference>
<dbReference type="PROSITE" id="PS50056">
    <property type="entry name" value="TYR_PHOSPHATASE_2"/>
    <property type="match status" value="1"/>
</dbReference>
<evidence type="ECO:0000250" key="1">
    <source>
        <dbReference type="UniProtKB" id="Q13614"/>
    </source>
</evidence>
<evidence type="ECO:0000250" key="2">
    <source>
        <dbReference type="UniProtKB" id="Q9Z2D1"/>
    </source>
</evidence>
<evidence type="ECO:0000255" key="3"/>
<evidence type="ECO:0000255" key="4">
    <source>
        <dbReference type="PROSITE-ProRule" id="PRU00669"/>
    </source>
</evidence>
<evidence type="ECO:0000256" key="5">
    <source>
        <dbReference type="SAM" id="MobiDB-lite"/>
    </source>
</evidence>
<evidence type="ECO:0000305" key="6"/>
<gene>
    <name evidence="1" type="primary">MTMR2</name>
</gene>